<evidence type="ECO:0000255" key="1">
    <source>
        <dbReference type="HAMAP-Rule" id="MF_01398"/>
    </source>
</evidence>
<sequence length="156" mass="17258">MNLNATILGQAIAFVLFVIFCMKYVWPPIMAAIEKRQQEIADGLSSAERAKKDLDLAQANATDQLKKAKAEAQVIIEQASKRKAQILDEAKAEAEQERNKIVAQAQAEIDAERKRAREELRKQVAMLAIAGAEKIIERSVDEAANSDIVDKLVAEL</sequence>
<accession>Q1C091</accession>
<comment type="function">
    <text evidence="1">F(1)F(0) ATP synthase produces ATP from ADP in the presence of a proton or sodium gradient. F-type ATPases consist of two structural domains, F(1) containing the extramembraneous catalytic core and F(0) containing the membrane proton channel, linked together by a central stalk and a peripheral stalk. During catalysis, ATP synthesis in the catalytic domain of F(1) is coupled via a rotary mechanism of the central stalk subunits to proton translocation.</text>
</comment>
<comment type="function">
    <text evidence="1">Component of the F(0) channel, it forms part of the peripheral stalk, linking F(1) to F(0).</text>
</comment>
<comment type="subunit">
    <text evidence="1">F-type ATPases have 2 components, F(1) - the catalytic core - and F(0) - the membrane proton channel. F(1) has five subunits: alpha(3), beta(3), gamma(1), delta(1), epsilon(1). F(0) has three main subunits: a(1), b(2) and c(10-14). The alpha and beta chains form an alternating ring which encloses part of the gamma chain. F(1) is attached to F(0) by a central stalk formed by the gamma and epsilon chains, while a peripheral stalk is formed by the delta and b chains.</text>
</comment>
<comment type="subcellular location">
    <subcellularLocation>
        <location evidence="1">Cell inner membrane</location>
        <topology evidence="1">Single-pass membrane protein</topology>
    </subcellularLocation>
</comment>
<comment type="similarity">
    <text evidence="1">Belongs to the ATPase B chain family.</text>
</comment>
<reference key="1">
    <citation type="journal article" date="2006" name="J. Bacteriol.">
        <title>Complete genome sequence of Yersinia pestis strains Antiqua and Nepal516: evidence of gene reduction in an emerging pathogen.</title>
        <authorList>
            <person name="Chain P.S.G."/>
            <person name="Hu P."/>
            <person name="Malfatti S.A."/>
            <person name="Radnedge L."/>
            <person name="Larimer F."/>
            <person name="Vergez L.M."/>
            <person name="Worsham P."/>
            <person name="Chu M.C."/>
            <person name="Andersen G.L."/>
        </authorList>
    </citation>
    <scope>NUCLEOTIDE SEQUENCE [LARGE SCALE GENOMIC DNA]</scope>
    <source>
        <strain>Antiqua</strain>
    </source>
</reference>
<dbReference type="EMBL" id="CP000308">
    <property type="protein sequence ID" value="ABG16131.1"/>
    <property type="molecule type" value="Genomic_DNA"/>
</dbReference>
<dbReference type="RefSeq" id="WP_002220762.1">
    <property type="nucleotide sequence ID" value="NZ_CP009906.1"/>
</dbReference>
<dbReference type="SMR" id="Q1C091"/>
<dbReference type="GeneID" id="57974599"/>
<dbReference type="KEGG" id="ypa:YPA_4170"/>
<dbReference type="Proteomes" id="UP000001971">
    <property type="component" value="Chromosome"/>
</dbReference>
<dbReference type="GO" id="GO:0005886">
    <property type="term" value="C:plasma membrane"/>
    <property type="evidence" value="ECO:0007669"/>
    <property type="project" value="UniProtKB-SubCell"/>
</dbReference>
<dbReference type="GO" id="GO:0045259">
    <property type="term" value="C:proton-transporting ATP synthase complex"/>
    <property type="evidence" value="ECO:0007669"/>
    <property type="project" value="UniProtKB-KW"/>
</dbReference>
<dbReference type="GO" id="GO:0046933">
    <property type="term" value="F:proton-transporting ATP synthase activity, rotational mechanism"/>
    <property type="evidence" value="ECO:0007669"/>
    <property type="project" value="UniProtKB-UniRule"/>
</dbReference>
<dbReference type="GO" id="GO:0046961">
    <property type="term" value="F:proton-transporting ATPase activity, rotational mechanism"/>
    <property type="evidence" value="ECO:0007669"/>
    <property type="project" value="TreeGrafter"/>
</dbReference>
<dbReference type="CDD" id="cd06503">
    <property type="entry name" value="ATP-synt_Fo_b"/>
    <property type="match status" value="1"/>
</dbReference>
<dbReference type="FunFam" id="1.20.5.620:FF:000001">
    <property type="entry name" value="ATP synthase subunit b"/>
    <property type="match status" value="1"/>
</dbReference>
<dbReference type="Gene3D" id="1.20.5.620">
    <property type="entry name" value="F1F0 ATP synthase subunit B, membrane domain"/>
    <property type="match status" value="1"/>
</dbReference>
<dbReference type="HAMAP" id="MF_01398">
    <property type="entry name" value="ATP_synth_b_bprime"/>
    <property type="match status" value="1"/>
</dbReference>
<dbReference type="InterPro" id="IPR028987">
    <property type="entry name" value="ATP_synth_B-like_membr_sf"/>
</dbReference>
<dbReference type="InterPro" id="IPR002146">
    <property type="entry name" value="ATP_synth_b/b'su_bac/chlpt"/>
</dbReference>
<dbReference type="InterPro" id="IPR005864">
    <property type="entry name" value="ATP_synth_F0_bsu_bac"/>
</dbReference>
<dbReference type="InterPro" id="IPR050059">
    <property type="entry name" value="ATP_synthase_B_chain"/>
</dbReference>
<dbReference type="NCBIfam" id="TIGR01144">
    <property type="entry name" value="ATP_synt_b"/>
    <property type="match status" value="1"/>
</dbReference>
<dbReference type="NCBIfam" id="NF004411">
    <property type="entry name" value="PRK05759.1-2"/>
    <property type="match status" value="1"/>
</dbReference>
<dbReference type="NCBIfam" id="NF004413">
    <property type="entry name" value="PRK05759.1-4"/>
    <property type="match status" value="1"/>
</dbReference>
<dbReference type="PANTHER" id="PTHR33445:SF1">
    <property type="entry name" value="ATP SYNTHASE SUBUNIT B"/>
    <property type="match status" value="1"/>
</dbReference>
<dbReference type="PANTHER" id="PTHR33445">
    <property type="entry name" value="ATP SYNTHASE SUBUNIT B', CHLOROPLASTIC"/>
    <property type="match status" value="1"/>
</dbReference>
<dbReference type="Pfam" id="PF00430">
    <property type="entry name" value="ATP-synt_B"/>
    <property type="match status" value="1"/>
</dbReference>
<dbReference type="SUPFAM" id="SSF81573">
    <property type="entry name" value="F1F0 ATP synthase subunit B, membrane domain"/>
    <property type="match status" value="1"/>
</dbReference>
<organism>
    <name type="scientific">Yersinia pestis bv. Antiqua (strain Antiqua)</name>
    <dbReference type="NCBI Taxonomy" id="360102"/>
    <lineage>
        <taxon>Bacteria</taxon>
        <taxon>Pseudomonadati</taxon>
        <taxon>Pseudomonadota</taxon>
        <taxon>Gammaproteobacteria</taxon>
        <taxon>Enterobacterales</taxon>
        <taxon>Yersiniaceae</taxon>
        <taxon>Yersinia</taxon>
    </lineage>
</organism>
<keyword id="KW-0066">ATP synthesis</keyword>
<keyword id="KW-0997">Cell inner membrane</keyword>
<keyword id="KW-1003">Cell membrane</keyword>
<keyword id="KW-0138">CF(0)</keyword>
<keyword id="KW-0375">Hydrogen ion transport</keyword>
<keyword id="KW-0406">Ion transport</keyword>
<keyword id="KW-0472">Membrane</keyword>
<keyword id="KW-0812">Transmembrane</keyword>
<keyword id="KW-1133">Transmembrane helix</keyword>
<keyword id="KW-0813">Transport</keyword>
<protein>
    <recommendedName>
        <fullName evidence="1">ATP synthase subunit b</fullName>
    </recommendedName>
    <alternativeName>
        <fullName evidence="1">ATP synthase F(0) sector subunit b</fullName>
    </alternativeName>
    <alternativeName>
        <fullName evidence="1">ATPase subunit I</fullName>
    </alternativeName>
    <alternativeName>
        <fullName evidence="1">F-type ATPase subunit b</fullName>
        <shortName evidence="1">F-ATPase subunit b</shortName>
    </alternativeName>
</protein>
<feature type="chain" id="PRO_0000368881" description="ATP synthase subunit b">
    <location>
        <begin position="1"/>
        <end position="156"/>
    </location>
</feature>
<feature type="transmembrane region" description="Helical" evidence="1">
    <location>
        <begin position="11"/>
        <end position="31"/>
    </location>
</feature>
<name>ATPF_YERPA</name>
<proteinExistence type="inferred from homology"/>
<gene>
    <name evidence="1" type="primary">atpF</name>
    <name type="ordered locus">YPA_4170</name>
</gene>